<reference key="1">
    <citation type="submission" date="2007-06" db="EMBL/GenBank/DDBJ databases">
        <authorList>
            <person name="Dodson R.J."/>
            <person name="Harkins D."/>
            <person name="Paulsen I.T."/>
        </authorList>
    </citation>
    <scope>NUCLEOTIDE SEQUENCE [LARGE SCALE GENOMIC DNA]</scope>
    <source>
        <strain>DSM 24068 / PA7</strain>
    </source>
</reference>
<protein>
    <recommendedName>
        <fullName evidence="1">Nucleotide-binding protein PSPA7_4966</fullName>
    </recommendedName>
</protein>
<name>Y4966_PSEP7</name>
<accession>A6VB67</accession>
<keyword id="KW-0547">Nucleotide-binding</keyword>
<feature type="chain" id="PRO_1000061402" description="Nucleotide-binding protein PSPA7_4966">
    <location>
        <begin position="1"/>
        <end position="159"/>
    </location>
</feature>
<proteinExistence type="inferred from homology"/>
<comment type="function">
    <text evidence="1">Nucleotide-binding protein.</text>
</comment>
<comment type="similarity">
    <text evidence="1">Belongs to the YajQ family.</text>
</comment>
<gene>
    <name type="ordered locus">PSPA7_4966</name>
</gene>
<organism>
    <name type="scientific">Pseudomonas paraeruginosa (strain DSM 24068 / PA7)</name>
    <name type="common">Pseudomonas aeruginosa (strain PA7)</name>
    <dbReference type="NCBI Taxonomy" id="381754"/>
    <lineage>
        <taxon>Bacteria</taxon>
        <taxon>Pseudomonadati</taxon>
        <taxon>Pseudomonadota</taxon>
        <taxon>Gammaproteobacteria</taxon>
        <taxon>Pseudomonadales</taxon>
        <taxon>Pseudomonadaceae</taxon>
        <taxon>Pseudomonas</taxon>
        <taxon>Pseudomonas paraeruginosa</taxon>
    </lineage>
</organism>
<dbReference type="EMBL" id="CP000744">
    <property type="protein sequence ID" value="ABR83889.1"/>
    <property type="molecule type" value="Genomic_DNA"/>
</dbReference>
<dbReference type="RefSeq" id="WP_003155666.1">
    <property type="nucleotide sequence ID" value="NC_009656.1"/>
</dbReference>
<dbReference type="SMR" id="A6VB67"/>
<dbReference type="GeneID" id="77222895"/>
<dbReference type="KEGG" id="pap:PSPA7_4966"/>
<dbReference type="HOGENOM" id="CLU_099839_1_0_6"/>
<dbReference type="Proteomes" id="UP000001582">
    <property type="component" value="Chromosome"/>
</dbReference>
<dbReference type="GO" id="GO:0005829">
    <property type="term" value="C:cytosol"/>
    <property type="evidence" value="ECO:0007669"/>
    <property type="project" value="TreeGrafter"/>
</dbReference>
<dbReference type="GO" id="GO:0000166">
    <property type="term" value="F:nucleotide binding"/>
    <property type="evidence" value="ECO:0007669"/>
    <property type="project" value="TreeGrafter"/>
</dbReference>
<dbReference type="CDD" id="cd11740">
    <property type="entry name" value="YajQ_like"/>
    <property type="match status" value="1"/>
</dbReference>
<dbReference type="FunFam" id="3.30.70.860:FF:000001">
    <property type="entry name" value="UPF0234 protein YajQ"/>
    <property type="match status" value="1"/>
</dbReference>
<dbReference type="FunFam" id="3.30.70.990:FF:000001">
    <property type="entry name" value="UPF0234 protein YajQ"/>
    <property type="match status" value="1"/>
</dbReference>
<dbReference type="Gene3D" id="3.30.70.860">
    <property type="match status" value="1"/>
</dbReference>
<dbReference type="Gene3D" id="3.30.70.990">
    <property type="entry name" value="YajQ-like, domain 2"/>
    <property type="match status" value="1"/>
</dbReference>
<dbReference type="HAMAP" id="MF_00632">
    <property type="entry name" value="YajQ"/>
    <property type="match status" value="1"/>
</dbReference>
<dbReference type="InterPro" id="IPR007551">
    <property type="entry name" value="DUF520"/>
</dbReference>
<dbReference type="InterPro" id="IPR035571">
    <property type="entry name" value="UPF0234-like_C"/>
</dbReference>
<dbReference type="InterPro" id="IPR035570">
    <property type="entry name" value="UPF0234_N"/>
</dbReference>
<dbReference type="InterPro" id="IPR036183">
    <property type="entry name" value="YajQ-like_sf"/>
</dbReference>
<dbReference type="NCBIfam" id="NF003819">
    <property type="entry name" value="PRK05412.1"/>
    <property type="match status" value="1"/>
</dbReference>
<dbReference type="PANTHER" id="PTHR30476">
    <property type="entry name" value="UPF0234 PROTEIN YAJQ"/>
    <property type="match status" value="1"/>
</dbReference>
<dbReference type="PANTHER" id="PTHR30476:SF0">
    <property type="entry name" value="UPF0234 PROTEIN YAJQ"/>
    <property type="match status" value="1"/>
</dbReference>
<dbReference type="Pfam" id="PF04461">
    <property type="entry name" value="DUF520"/>
    <property type="match status" value="1"/>
</dbReference>
<dbReference type="SUPFAM" id="SSF89963">
    <property type="entry name" value="YajQ-like"/>
    <property type="match status" value="2"/>
</dbReference>
<sequence>MPSFDVVSELDKHELTNAVDNAIKELDRRFDLKGKCSFEAKDKSVTLTAEADFMLEQMLDILRSNLVKRKVDSQCMEVKDAYPSGKVVKQEVNFREGIDKDLAKKIVGLIKERKLKVQAAIQGEQVRVTGKKRDDLQEAIALLRGESLGMPLQFTNFRD</sequence>
<evidence type="ECO:0000255" key="1">
    <source>
        <dbReference type="HAMAP-Rule" id="MF_00632"/>
    </source>
</evidence>